<organism>
    <name type="scientific">Bacillus subtilis (strain 168)</name>
    <dbReference type="NCBI Taxonomy" id="224308"/>
    <lineage>
        <taxon>Bacteria</taxon>
        <taxon>Bacillati</taxon>
        <taxon>Bacillota</taxon>
        <taxon>Bacilli</taxon>
        <taxon>Bacillales</taxon>
        <taxon>Bacillaceae</taxon>
        <taxon>Bacillus</taxon>
    </lineage>
</organism>
<name>YOYD_BACSU</name>
<keyword id="KW-1003">Cell membrane</keyword>
<keyword id="KW-0472">Membrane</keyword>
<keyword id="KW-1185">Reference proteome</keyword>
<keyword id="KW-0812">Transmembrane</keyword>
<keyword id="KW-1133">Transmembrane helix</keyword>
<comment type="subcellular location">
    <subcellularLocation>
        <location evidence="2">Cell membrane</location>
        <topology evidence="2">Multi-pass membrane protein</topology>
    </subcellularLocation>
</comment>
<feature type="chain" id="PRO_0000382671" description="Uncharacterized membrane protein YoyD">
    <location>
        <begin position="1"/>
        <end position="66"/>
    </location>
</feature>
<feature type="transmembrane region" description="Helical" evidence="1">
    <location>
        <begin position="5"/>
        <end position="25"/>
    </location>
</feature>
<feature type="transmembrane region" description="Helical" evidence="1">
    <location>
        <begin position="30"/>
        <end position="50"/>
    </location>
</feature>
<dbReference type="EMBL" id="AL009126">
    <property type="protein sequence ID" value="CAX52639.1"/>
    <property type="molecule type" value="Genomic_DNA"/>
</dbReference>
<dbReference type="RefSeq" id="WP_003231189.1">
    <property type="nucleotide sequence ID" value="NZ_OZ025638.1"/>
</dbReference>
<dbReference type="RefSeq" id="YP_003097742.1">
    <property type="nucleotide sequence ID" value="NC_000964.3"/>
</dbReference>
<dbReference type="SMR" id="C0H431"/>
<dbReference type="FunCoup" id="C0H431">
    <property type="interactions" value="29"/>
</dbReference>
<dbReference type="STRING" id="224308.BSU19579"/>
<dbReference type="PaxDb" id="224308-BSU19579"/>
<dbReference type="EnsemblBacteria" id="CAX52639">
    <property type="protein sequence ID" value="CAX52639"/>
    <property type="gene ID" value="BSU_19579"/>
</dbReference>
<dbReference type="GeneID" id="8303187"/>
<dbReference type="KEGG" id="bsu:BSU19579"/>
<dbReference type="PATRIC" id="fig|224308.179.peg.2140"/>
<dbReference type="eggNOG" id="ENOG50339IS">
    <property type="taxonomic scope" value="Bacteria"/>
</dbReference>
<dbReference type="InParanoid" id="C0H431"/>
<dbReference type="OrthoDB" id="3628949at2"/>
<dbReference type="BioCyc" id="BSUB:BSU19579-MONOMER"/>
<dbReference type="Proteomes" id="UP000001570">
    <property type="component" value="Chromosome"/>
</dbReference>
<dbReference type="GO" id="GO:0005886">
    <property type="term" value="C:plasma membrane"/>
    <property type="evidence" value="ECO:0007669"/>
    <property type="project" value="UniProtKB-SubCell"/>
</dbReference>
<dbReference type="InterPro" id="IPR021741">
    <property type="entry name" value="DUF3311"/>
</dbReference>
<dbReference type="PANTHER" id="PTHR40034">
    <property type="entry name" value="BSL5891 PROTEIN"/>
    <property type="match status" value="1"/>
</dbReference>
<dbReference type="PANTHER" id="PTHR40034:SF1">
    <property type="entry name" value="BSL5891 PROTEIN"/>
    <property type="match status" value="1"/>
</dbReference>
<dbReference type="Pfam" id="PF11755">
    <property type="entry name" value="DUF3311"/>
    <property type="match status" value="1"/>
</dbReference>
<sequence>MVKKALIVILILLPFVQLALLPLVNRIEPIMFGLPFFHFWLLLWIIVTPLCSFGIYQMQKKDGGLE</sequence>
<proteinExistence type="predicted"/>
<gene>
    <name type="primary">yoyD</name>
    <name type="ordered locus">BSU19579</name>
</gene>
<reference key="1">
    <citation type="journal article" date="1997" name="Nature">
        <title>The complete genome sequence of the Gram-positive bacterium Bacillus subtilis.</title>
        <authorList>
            <person name="Kunst F."/>
            <person name="Ogasawara N."/>
            <person name="Moszer I."/>
            <person name="Albertini A.M."/>
            <person name="Alloni G."/>
            <person name="Azevedo V."/>
            <person name="Bertero M.G."/>
            <person name="Bessieres P."/>
            <person name="Bolotin A."/>
            <person name="Borchert S."/>
            <person name="Borriss R."/>
            <person name="Boursier L."/>
            <person name="Brans A."/>
            <person name="Braun M."/>
            <person name="Brignell S.C."/>
            <person name="Bron S."/>
            <person name="Brouillet S."/>
            <person name="Bruschi C.V."/>
            <person name="Caldwell B."/>
            <person name="Capuano V."/>
            <person name="Carter N.M."/>
            <person name="Choi S.-K."/>
            <person name="Codani J.-J."/>
            <person name="Connerton I.F."/>
            <person name="Cummings N.J."/>
            <person name="Daniel R.A."/>
            <person name="Denizot F."/>
            <person name="Devine K.M."/>
            <person name="Duesterhoeft A."/>
            <person name="Ehrlich S.D."/>
            <person name="Emmerson P.T."/>
            <person name="Entian K.-D."/>
            <person name="Errington J."/>
            <person name="Fabret C."/>
            <person name="Ferrari E."/>
            <person name="Foulger D."/>
            <person name="Fritz C."/>
            <person name="Fujita M."/>
            <person name="Fujita Y."/>
            <person name="Fuma S."/>
            <person name="Galizzi A."/>
            <person name="Galleron N."/>
            <person name="Ghim S.-Y."/>
            <person name="Glaser P."/>
            <person name="Goffeau A."/>
            <person name="Golightly E.J."/>
            <person name="Grandi G."/>
            <person name="Guiseppi G."/>
            <person name="Guy B.J."/>
            <person name="Haga K."/>
            <person name="Haiech J."/>
            <person name="Harwood C.R."/>
            <person name="Henaut A."/>
            <person name="Hilbert H."/>
            <person name="Holsappel S."/>
            <person name="Hosono S."/>
            <person name="Hullo M.-F."/>
            <person name="Itaya M."/>
            <person name="Jones L.-M."/>
            <person name="Joris B."/>
            <person name="Karamata D."/>
            <person name="Kasahara Y."/>
            <person name="Klaerr-Blanchard M."/>
            <person name="Klein C."/>
            <person name="Kobayashi Y."/>
            <person name="Koetter P."/>
            <person name="Koningstein G."/>
            <person name="Krogh S."/>
            <person name="Kumano M."/>
            <person name="Kurita K."/>
            <person name="Lapidus A."/>
            <person name="Lardinois S."/>
            <person name="Lauber J."/>
            <person name="Lazarevic V."/>
            <person name="Lee S.-M."/>
            <person name="Levine A."/>
            <person name="Liu H."/>
            <person name="Masuda S."/>
            <person name="Mauel C."/>
            <person name="Medigue C."/>
            <person name="Medina N."/>
            <person name="Mellado R.P."/>
            <person name="Mizuno M."/>
            <person name="Moestl D."/>
            <person name="Nakai S."/>
            <person name="Noback M."/>
            <person name="Noone D."/>
            <person name="O'Reilly M."/>
            <person name="Ogawa K."/>
            <person name="Ogiwara A."/>
            <person name="Oudega B."/>
            <person name="Park S.-H."/>
            <person name="Parro V."/>
            <person name="Pohl T.M."/>
            <person name="Portetelle D."/>
            <person name="Porwollik S."/>
            <person name="Prescott A.M."/>
            <person name="Presecan E."/>
            <person name="Pujic P."/>
            <person name="Purnelle B."/>
            <person name="Rapoport G."/>
            <person name="Rey M."/>
            <person name="Reynolds S."/>
            <person name="Rieger M."/>
            <person name="Rivolta C."/>
            <person name="Rocha E."/>
            <person name="Roche B."/>
            <person name="Rose M."/>
            <person name="Sadaie Y."/>
            <person name="Sato T."/>
            <person name="Scanlan E."/>
            <person name="Schleich S."/>
            <person name="Schroeter R."/>
            <person name="Scoffone F."/>
            <person name="Sekiguchi J."/>
            <person name="Sekowska A."/>
            <person name="Seror S.J."/>
            <person name="Serror P."/>
            <person name="Shin B.-S."/>
            <person name="Soldo B."/>
            <person name="Sorokin A."/>
            <person name="Tacconi E."/>
            <person name="Takagi T."/>
            <person name="Takahashi H."/>
            <person name="Takemaru K."/>
            <person name="Takeuchi M."/>
            <person name="Tamakoshi A."/>
            <person name="Tanaka T."/>
            <person name="Terpstra P."/>
            <person name="Tognoni A."/>
            <person name="Tosato V."/>
            <person name="Uchiyama S."/>
            <person name="Vandenbol M."/>
            <person name="Vannier F."/>
            <person name="Vassarotti A."/>
            <person name="Viari A."/>
            <person name="Wambutt R."/>
            <person name="Wedler E."/>
            <person name="Wedler H."/>
            <person name="Weitzenegger T."/>
            <person name="Winters P."/>
            <person name="Wipat A."/>
            <person name="Yamamoto H."/>
            <person name="Yamane K."/>
            <person name="Yasumoto K."/>
            <person name="Yata K."/>
            <person name="Yoshida K."/>
            <person name="Yoshikawa H.-F."/>
            <person name="Zumstein E."/>
            <person name="Yoshikawa H."/>
            <person name="Danchin A."/>
        </authorList>
    </citation>
    <scope>NUCLEOTIDE SEQUENCE [LARGE SCALE GENOMIC DNA]</scope>
    <source>
        <strain>168</strain>
    </source>
</reference>
<accession>C0H431</accession>
<evidence type="ECO:0000255" key="1"/>
<evidence type="ECO:0000305" key="2"/>
<protein>
    <recommendedName>
        <fullName>Uncharacterized membrane protein YoyD</fullName>
    </recommendedName>
</protein>